<comment type="function">
    <text evidence="1 2">Receptor for chemoattractant adipokine chemerin/RARRES2 suggesting a role for this receptor in the regulation of inflammation and energy homesotasis (By similarity). Signals mainly via beta-arrestin pathway. Binding of RARRES2 activates weakly G proteins, calcium mobilization and MAPK1/MAPK3 (ERK1/2) phosphorylation too. Acts also as a receptor for TAFA1, mediates its effects on neuronal stem-cell proliferation and differentiation via the activation of ROCK/ERK and ROCK/STAT3 signaling pathway (By similarity).</text>
</comment>
<comment type="subcellular location">
    <subcellularLocation>
        <location evidence="2">Cell membrane</location>
        <topology evidence="3">Multi-pass membrane protein</topology>
    </subcellularLocation>
    <text evidence="1 2">Internalizes in presence of its ligand, TAFA1 (By similarity). Internalizes efficiently in response to RARRES2 (By similarity).</text>
</comment>
<comment type="similarity">
    <text evidence="5">Belongs to the chemokine-like receptor (CMKLR) family.</text>
</comment>
<protein>
    <recommendedName>
        <fullName>Chemerin-like receptor 2</fullName>
    </recommendedName>
    <alternativeName>
        <fullName>Chemerin chemokine-like receptor 2</fullName>
    </alternativeName>
    <alternativeName>
        <fullName>Chemokine-like receptor 2</fullName>
    </alternativeName>
    <alternativeName>
        <fullName>G-protein coupled receptor 1</fullName>
    </alternativeName>
</protein>
<sequence length="355" mass="41361">MEDLEETLFEEFENYSYALDYYSLESDLEEKVQLGVVHWVSLVLYCLSFVLGIPGNAIVIWFTGFKWKKTVSTLWFLNLAIADFIFLLFLPLYISYVVMNFHWPFGIWLCKANSFTAQLNMFASVFFLTVISLDHYIHLIHPVLSHRHRTLKNSLIVIIFIWLLASLIGGPALYFRDTVEFNNHTLCYNNFQKHDPDLTVIRHHVLTWVKFIVGYLFPLLTMSICYLCLIFKVKKRSILISSRHFWTILAVVVAFVVCWTPYHLFSIWELTIHHNSYSHHVMQAGIPLSTGLAFLNSCLNPILYVLISKKFQARFRSSVAEILKYTLWEVSCSGTVSEQLRNSETKNLCLLETAQ</sequence>
<evidence type="ECO:0000250" key="1">
    <source>
        <dbReference type="UniProtKB" id="P46091"/>
    </source>
</evidence>
<evidence type="ECO:0000250" key="2">
    <source>
        <dbReference type="UniProtKB" id="Q8K087"/>
    </source>
</evidence>
<evidence type="ECO:0000255" key="3"/>
<evidence type="ECO:0000255" key="4">
    <source>
        <dbReference type="PROSITE-ProRule" id="PRU00521"/>
    </source>
</evidence>
<evidence type="ECO:0000305" key="5"/>
<organism>
    <name type="scientific">Macaca mulatta</name>
    <name type="common">Rhesus macaque</name>
    <dbReference type="NCBI Taxonomy" id="9544"/>
    <lineage>
        <taxon>Eukaryota</taxon>
        <taxon>Metazoa</taxon>
        <taxon>Chordata</taxon>
        <taxon>Craniata</taxon>
        <taxon>Vertebrata</taxon>
        <taxon>Euteleostomi</taxon>
        <taxon>Mammalia</taxon>
        <taxon>Eutheria</taxon>
        <taxon>Euarchontoglires</taxon>
        <taxon>Primates</taxon>
        <taxon>Haplorrhini</taxon>
        <taxon>Catarrhini</taxon>
        <taxon>Cercopithecidae</taxon>
        <taxon>Cercopithecinae</taxon>
        <taxon>Macaca</taxon>
    </lineage>
</organism>
<dbReference type="EMBL" id="AF100204">
    <property type="protein sequence ID" value="AAC72402.1"/>
    <property type="molecule type" value="Genomic_DNA"/>
</dbReference>
<dbReference type="RefSeq" id="NP_001040594.1">
    <property type="nucleotide sequence ID" value="NM_001047129.1"/>
</dbReference>
<dbReference type="RefSeq" id="XP_014966212.1">
    <property type="nucleotide sequence ID" value="XM_015110726.1"/>
</dbReference>
<dbReference type="RefSeq" id="XP_014966213.1">
    <property type="nucleotide sequence ID" value="XM_015110727.1"/>
</dbReference>
<dbReference type="RefSeq" id="XP_014966214.1">
    <property type="nucleotide sequence ID" value="XM_015110728.1"/>
</dbReference>
<dbReference type="RefSeq" id="XP_014966215.1">
    <property type="nucleotide sequence ID" value="XM_015110729.1"/>
</dbReference>
<dbReference type="SMR" id="O97664"/>
<dbReference type="FunCoup" id="O97664">
    <property type="interactions" value="382"/>
</dbReference>
<dbReference type="STRING" id="9544.ENSMMUP00000010928"/>
<dbReference type="GlyCosmos" id="O97664">
    <property type="glycosylation" value="1 site, No reported glycans"/>
</dbReference>
<dbReference type="PaxDb" id="9544-ENSMMUP00000010928"/>
<dbReference type="Ensembl" id="ENSMMUT00000011655.4">
    <property type="protein sequence ID" value="ENSMMUP00000010928.2"/>
    <property type="gene ID" value="ENSMMUG00000008334.4"/>
</dbReference>
<dbReference type="GeneID" id="707120"/>
<dbReference type="KEGG" id="mcc:707120"/>
<dbReference type="CTD" id="2825"/>
<dbReference type="VEuPathDB" id="HostDB:ENSMMUG00000008334"/>
<dbReference type="VGNC" id="VGNC:73124">
    <property type="gene designation" value="CMKLR2"/>
</dbReference>
<dbReference type="eggNOG" id="KOG3656">
    <property type="taxonomic scope" value="Eukaryota"/>
</dbReference>
<dbReference type="GeneTree" id="ENSGT00940000160642"/>
<dbReference type="HOGENOM" id="CLU_009579_8_0_1"/>
<dbReference type="InParanoid" id="O97664"/>
<dbReference type="OMA" id="ISSKHFW"/>
<dbReference type="OrthoDB" id="6088892at2759"/>
<dbReference type="TreeFam" id="TF330976"/>
<dbReference type="Proteomes" id="UP000006718">
    <property type="component" value="Chromosome 12"/>
</dbReference>
<dbReference type="Bgee" id="ENSMMUG00000008334">
    <property type="expression patterns" value="Expressed in fibroblast and 17 other cell types or tissues"/>
</dbReference>
<dbReference type="ExpressionAtlas" id="O97664">
    <property type="expression patterns" value="baseline"/>
</dbReference>
<dbReference type="GO" id="GO:0043005">
    <property type="term" value="C:neuron projection"/>
    <property type="evidence" value="ECO:0000318"/>
    <property type="project" value="GO_Central"/>
</dbReference>
<dbReference type="GO" id="GO:0005654">
    <property type="term" value="C:nucleoplasm"/>
    <property type="evidence" value="ECO:0007669"/>
    <property type="project" value="Ensembl"/>
</dbReference>
<dbReference type="GO" id="GO:0005886">
    <property type="term" value="C:plasma membrane"/>
    <property type="evidence" value="ECO:0000250"/>
    <property type="project" value="UniProtKB"/>
</dbReference>
<dbReference type="GO" id="GO:0097004">
    <property type="term" value="F:adipokinetic hormone binding"/>
    <property type="evidence" value="ECO:0000250"/>
    <property type="project" value="UniProtKB"/>
</dbReference>
<dbReference type="GO" id="GO:0097003">
    <property type="term" value="F:adipokinetic hormone receptor activity"/>
    <property type="evidence" value="ECO:0000250"/>
    <property type="project" value="UniProtKB"/>
</dbReference>
<dbReference type="GO" id="GO:0004930">
    <property type="term" value="F:G protein-coupled receptor activity"/>
    <property type="evidence" value="ECO:0000318"/>
    <property type="project" value="GO_Central"/>
</dbReference>
<dbReference type="GO" id="GO:0042923">
    <property type="term" value="F:neuropeptide binding"/>
    <property type="evidence" value="ECO:0000318"/>
    <property type="project" value="GO_Central"/>
</dbReference>
<dbReference type="GO" id="GO:0042593">
    <property type="term" value="P:glucose homeostasis"/>
    <property type="evidence" value="ECO:0000250"/>
    <property type="project" value="UniProtKB"/>
</dbReference>
<dbReference type="GO" id="GO:0007218">
    <property type="term" value="P:neuropeptide signaling pathway"/>
    <property type="evidence" value="ECO:0000318"/>
    <property type="project" value="GO_Central"/>
</dbReference>
<dbReference type="CDD" id="cd15119">
    <property type="entry name" value="7tmA_GPR1"/>
    <property type="match status" value="1"/>
</dbReference>
<dbReference type="FunFam" id="1.20.1070.10:FF:000034">
    <property type="entry name" value="G-protein coupled receptor 1"/>
    <property type="match status" value="1"/>
</dbReference>
<dbReference type="Gene3D" id="1.20.1070.10">
    <property type="entry name" value="Rhodopsin 7-helix transmembrane proteins"/>
    <property type="match status" value="1"/>
</dbReference>
<dbReference type="InterPro" id="IPR002275">
    <property type="entry name" value="CML2"/>
</dbReference>
<dbReference type="InterPro" id="IPR000826">
    <property type="entry name" value="Formyl_rcpt-rel"/>
</dbReference>
<dbReference type="InterPro" id="IPR000276">
    <property type="entry name" value="GPCR_Rhodpsn"/>
</dbReference>
<dbReference type="InterPro" id="IPR017452">
    <property type="entry name" value="GPCR_Rhodpsn_7TM"/>
</dbReference>
<dbReference type="PANTHER" id="PTHR24225:SF74">
    <property type="entry name" value="CHEMOKINE-LIKE RECEPTOR 1"/>
    <property type="match status" value="1"/>
</dbReference>
<dbReference type="PANTHER" id="PTHR24225">
    <property type="entry name" value="CHEMOTACTIC RECEPTOR"/>
    <property type="match status" value="1"/>
</dbReference>
<dbReference type="Pfam" id="PF00001">
    <property type="entry name" value="7tm_1"/>
    <property type="match status" value="1"/>
</dbReference>
<dbReference type="PRINTS" id="PR00237">
    <property type="entry name" value="GPCRRHODOPSN"/>
</dbReference>
<dbReference type="PRINTS" id="PR01146">
    <property type="entry name" value="GPR1ORPHANR"/>
</dbReference>
<dbReference type="SUPFAM" id="SSF81321">
    <property type="entry name" value="Family A G protein-coupled receptor-like"/>
    <property type="match status" value="1"/>
</dbReference>
<dbReference type="PROSITE" id="PS50262">
    <property type="entry name" value="G_PROTEIN_RECEP_F1_2"/>
    <property type="match status" value="1"/>
</dbReference>
<keyword id="KW-1003">Cell membrane</keyword>
<keyword id="KW-1015">Disulfide bond</keyword>
<keyword id="KW-0297">G-protein coupled receptor</keyword>
<keyword id="KW-0325">Glycoprotein</keyword>
<keyword id="KW-0472">Membrane</keyword>
<keyword id="KW-0675">Receptor</keyword>
<keyword id="KW-1185">Reference proteome</keyword>
<keyword id="KW-0807">Transducer</keyword>
<keyword id="KW-0812">Transmembrane</keyword>
<keyword id="KW-1133">Transmembrane helix</keyword>
<reference key="1">
    <citation type="journal article" date="2001" name="AIDS Res. Hum. Retroviruses">
        <title>Identification and comparison of eleven rhesus macaque chemokine receptors.</title>
        <authorList>
            <person name="Margulies B.J."/>
            <person name="Hauer D.A."/>
            <person name="Clements J.E."/>
        </authorList>
    </citation>
    <scope>NUCLEOTIDE SEQUENCE [GENOMIC DNA]</scope>
    <source>
        <tissue>Spleen</tissue>
    </source>
</reference>
<name>CML2_MACMU</name>
<gene>
    <name type="primary">CMKLR2</name>
    <name type="synonym">GPR1</name>
</gene>
<accession>O97664</accession>
<feature type="chain" id="PRO_0000069507" description="Chemerin-like receptor 2">
    <location>
        <begin position="1"/>
        <end position="355"/>
    </location>
</feature>
<feature type="topological domain" description="Extracellular" evidence="3">
    <location>
        <begin position="1"/>
        <end position="41"/>
    </location>
</feature>
<feature type="transmembrane region" description="Helical; Name=1" evidence="3">
    <location>
        <begin position="42"/>
        <end position="62"/>
    </location>
</feature>
<feature type="topological domain" description="Cytoplasmic" evidence="3">
    <location>
        <begin position="63"/>
        <end position="73"/>
    </location>
</feature>
<feature type="transmembrane region" description="Helical; Name=2" evidence="3">
    <location>
        <begin position="74"/>
        <end position="94"/>
    </location>
</feature>
<feature type="topological domain" description="Extracellular" evidence="3">
    <location>
        <begin position="95"/>
        <end position="112"/>
    </location>
</feature>
<feature type="transmembrane region" description="Helical; Name=3" evidence="3">
    <location>
        <begin position="113"/>
        <end position="133"/>
    </location>
</feature>
<feature type="topological domain" description="Cytoplasmic" evidence="3">
    <location>
        <begin position="134"/>
        <end position="154"/>
    </location>
</feature>
<feature type="transmembrane region" description="Helical; Name=4" evidence="3">
    <location>
        <begin position="155"/>
        <end position="175"/>
    </location>
</feature>
<feature type="topological domain" description="Extracellular" evidence="3">
    <location>
        <begin position="176"/>
        <end position="210"/>
    </location>
</feature>
<feature type="transmembrane region" description="Helical; Name=5" evidence="3">
    <location>
        <begin position="211"/>
        <end position="231"/>
    </location>
</feature>
<feature type="topological domain" description="Cytoplasmic" evidence="3">
    <location>
        <begin position="232"/>
        <end position="247"/>
    </location>
</feature>
<feature type="transmembrane region" description="Helical; Name=6" evidence="3">
    <location>
        <begin position="248"/>
        <end position="268"/>
    </location>
</feature>
<feature type="topological domain" description="Extracellular" evidence="3">
    <location>
        <begin position="269"/>
        <end position="286"/>
    </location>
</feature>
<feature type="transmembrane region" description="Helical; Name=7" evidence="3">
    <location>
        <begin position="287"/>
        <end position="307"/>
    </location>
</feature>
<feature type="topological domain" description="Cytoplasmic" evidence="3">
    <location>
        <begin position="308"/>
        <end position="355"/>
    </location>
</feature>
<feature type="glycosylation site" description="N-linked (GlcNAc...) asparagine" evidence="3">
    <location>
        <position position="14"/>
    </location>
</feature>
<feature type="disulfide bond" evidence="4">
    <location>
        <begin position="110"/>
        <end position="187"/>
    </location>
</feature>
<proteinExistence type="inferred from homology"/>